<evidence type="ECO:0000250" key="1"/>
<evidence type="ECO:0000250" key="2">
    <source>
        <dbReference type="UniProtKB" id="Q9NYV7"/>
    </source>
</evidence>
<evidence type="ECO:0000255" key="3"/>
<evidence type="ECO:0000305" key="4"/>
<sequence>MIPIQLTVFFMIIYVLESLTIIVQSSLIVAVLGREWLQVRRLMPVDMILISLGISRFCLQWASMLNBFCSYFNLNYVLCNLTITWEFFNILTFWLNSLLTVFYCIKVSSFTHHIFLWLRWRILRLFPWILLGSLMITCVTIIPSAIGNYIQIQLLTMEHLPRNSTVTDKLEKFHQYEFQAHTVALVIPFILFLASTILLMASLTKQIQHHSTGHCNPSMKAHFTALRSLAVLFIVFTSYFLTILITIIGTLFDRRCWLWVWEAFVYAFILMHSTSLMLSSPTLKRILKGKC</sequence>
<keyword id="KW-1003">Cell membrane</keyword>
<keyword id="KW-0297">G-protein coupled receptor</keyword>
<keyword id="KW-0325">Glycoprotein</keyword>
<keyword id="KW-0472">Membrane</keyword>
<keyword id="KW-0675">Receptor</keyword>
<keyword id="KW-1185">Reference proteome</keyword>
<keyword id="KW-0716">Sensory transduction</keyword>
<keyword id="KW-0919">Taste</keyword>
<keyword id="KW-0807">Transducer</keyword>
<keyword id="KW-0812">Transmembrane</keyword>
<keyword id="KW-1133">Transmembrane helix</keyword>
<organism>
    <name type="scientific">Gorilla gorilla gorilla</name>
    <name type="common">Western lowland gorilla</name>
    <dbReference type="NCBI Taxonomy" id="9595"/>
    <lineage>
        <taxon>Eukaryota</taxon>
        <taxon>Metazoa</taxon>
        <taxon>Chordata</taxon>
        <taxon>Craniata</taxon>
        <taxon>Vertebrata</taxon>
        <taxon>Euteleostomi</taxon>
        <taxon>Mammalia</taxon>
        <taxon>Eutheria</taxon>
        <taxon>Euarchontoglires</taxon>
        <taxon>Primates</taxon>
        <taxon>Haplorrhini</taxon>
        <taxon>Catarrhini</taxon>
        <taxon>Hominidae</taxon>
        <taxon>Gorilla</taxon>
    </lineage>
</organism>
<protein>
    <recommendedName>
        <fullName>Taste receptor type 2 member 16</fullName>
        <shortName>T2R16</shortName>
    </recommendedName>
</protein>
<gene>
    <name type="primary">TAS2R16</name>
</gene>
<reference key="1">
    <citation type="journal article" date="2005" name="Mol. Biol. Evol.">
        <title>Evolution of bitter taste receptors in humans and apes.</title>
        <authorList>
            <person name="Fischer A."/>
            <person name="Gilad Y."/>
            <person name="Man O."/>
            <person name="Paeaebo S."/>
        </authorList>
    </citation>
    <scope>NUCLEOTIDE SEQUENCE [GENOMIC DNA]</scope>
</reference>
<dbReference type="EMBL" id="AY724929">
    <property type="protein sequence ID" value="AAU21135.1"/>
    <property type="molecule type" value="Genomic_DNA"/>
</dbReference>
<dbReference type="FunCoup" id="Q645Y4">
    <property type="interactions" value="173"/>
</dbReference>
<dbReference type="STRING" id="9593.ENSGGOP00000010099"/>
<dbReference type="GlyCosmos" id="Q645Y4">
    <property type="glycosylation" value="2 sites, No reported glycans"/>
</dbReference>
<dbReference type="eggNOG" id="ENOG502S2SI">
    <property type="taxonomic scope" value="Eukaryota"/>
</dbReference>
<dbReference type="InParanoid" id="Q645Y4"/>
<dbReference type="Proteomes" id="UP000001519">
    <property type="component" value="Unplaced"/>
</dbReference>
<dbReference type="GO" id="GO:0016020">
    <property type="term" value="C:membrane"/>
    <property type="evidence" value="ECO:0000318"/>
    <property type="project" value="GO_Central"/>
</dbReference>
<dbReference type="GO" id="GO:0005886">
    <property type="term" value="C:plasma membrane"/>
    <property type="evidence" value="ECO:0007669"/>
    <property type="project" value="UniProtKB-SubCell"/>
</dbReference>
<dbReference type="GO" id="GO:0033038">
    <property type="term" value="F:bitter taste receptor activity"/>
    <property type="evidence" value="ECO:0000318"/>
    <property type="project" value="GO_Central"/>
</dbReference>
<dbReference type="GO" id="GO:0004930">
    <property type="term" value="F:G protein-coupled receptor activity"/>
    <property type="evidence" value="ECO:0007669"/>
    <property type="project" value="UniProtKB-KW"/>
</dbReference>
<dbReference type="GO" id="GO:0001580">
    <property type="term" value="P:detection of chemical stimulus involved in sensory perception of bitter taste"/>
    <property type="evidence" value="ECO:0000318"/>
    <property type="project" value="GO_Central"/>
</dbReference>
<dbReference type="CDD" id="cd15017">
    <property type="entry name" value="7tm_TAS2R16"/>
    <property type="match status" value="1"/>
</dbReference>
<dbReference type="FunFam" id="1.20.1070.10:FF:000055">
    <property type="entry name" value="Taste receptor type 2"/>
    <property type="match status" value="1"/>
</dbReference>
<dbReference type="InterPro" id="IPR007960">
    <property type="entry name" value="TAS2R"/>
</dbReference>
<dbReference type="PANTHER" id="PTHR11394">
    <property type="entry name" value="TASTE RECEPTOR TYPE 2"/>
    <property type="match status" value="1"/>
</dbReference>
<dbReference type="PANTHER" id="PTHR11394:SF68">
    <property type="entry name" value="TASTE RECEPTOR TYPE 2 MEMBER 16"/>
    <property type="match status" value="1"/>
</dbReference>
<dbReference type="Pfam" id="PF05296">
    <property type="entry name" value="TAS2R"/>
    <property type="match status" value="1"/>
</dbReference>
<dbReference type="SUPFAM" id="SSF81321">
    <property type="entry name" value="Family A G protein-coupled receptor-like"/>
    <property type="match status" value="1"/>
</dbReference>
<comment type="function">
    <text evidence="1">Receptor that may play a role in the perception of bitterness and is gustducin-linked. May play a role in sensing the chemical composition of the gastrointestinal content. The activity of this receptor may stimulate alpha gustducin, mediate PLC-beta-2 activation and lead to the gating of TRPM5 (By similarity).</text>
</comment>
<comment type="subunit">
    <text evidence="2">Interacts with RTP3 and RTP4.</text>
</comment>
<comment type="subcellular location">
    <subcellularLocation>
        <location evidence="2">Cell membrane</location>
        <topology evidence="3">Multi-pass membrane protein</topology>
    </subcellularLocation>
</comment>
<comment type="miscellaneous">
    <text>Most taste cells may be activated by a limited number of bitter compounds; individual taste cells can discriminate among bitter stimuli.</text>
</comment>
<comment type="similarity">
    <text evidence="4">Belongs to the G-protein coupled receptor T2R family.</text>
</comment>
<name>T2R16_GORGO</name>
<feature type="chain" id="PRO_0000082261" description="Taste receptor type 2 member 16">
    <location>
        <begin position="1"/>
        <end position="291"/>
    </location>
</feature>
<feature type="topological domain" description="Extracellular" evidence="3">
    <location>
        <position position="1"/>
    </location>
</feature>
<feature type="transmembrane region" description="Helical; Name=1" evidence="3">
    <location>
        <begin position="2"/>
        <end position="22"/>
    </location>
</feature>
<feature type="topological domain" description="Cytoplasmic" evidence="3">
    <location>
        <begin position="23"/>
        <end position="41"/>
    </location>
</feature>
<feature type="transmembrane region" description="Helical; Name=2" evidence="3">
    <location>
        <begin position="42"/>
        <end position="62"/>
    </location>
</feature>
<feature type="topological domain" description="Extracellular" evidence="3">
    <location>
        <begin position="63"/>
        <end position="84"/>
    </location>
</feature>
<feature type="transmembrane region" description="Helical; Name=3" evidence="3">
    <location>
        <begin position="85"/>
        <end position="105"/>
    </location>
</feature>
<feature type="topological domain" description="Cytoplasmic" evidence="3">
    <location>
        <begin position="106"/>
        <end position="125"/>
    </location>
</feature>
<feature type="transmembrane region" description="Helical; Name=4" evidence="3">
    <location>
        <begin position="126"/>
        <end position="146"/>
    </location>
</feature>
<feature type="topological domain" description="Extracellular" evidence="3">
    <location>
        <begin position="147"/>
        <end position="182"/>
    </location>
</feature>
<feature type="transmembrane region" description="Helical; Name=5" evidence="3">
    <location>
        <begin position="183"/>
        <end position="203"/>
    </location>
</feature>
<feature type="topological domain" description="Cytoplasmic" evidence="3">
    <location>
        <begin position="204"/>
        <end position="228"/>
    </location>
</feature>
<feature type="transmembrane region" description="Helical; Name=6" evidence="3">
    <location>
        <begin position="229"/>
        <end position="249"/>
    </location>
</feature>
<feature type="topological domain" description="Extracellular" evidence="3">
    <location>
        <begin position="250"/>
        <end position="257"/>
    </location>
</feature>
<feature type="transmembrane region" description="Helical; Name=7" evidence="3">
    <location>
        <begin position="258"/>
        <end position="278"/>
    </location>
</feature>
<feature type="topological domain" description="Cytoplasmic" evidence="3">
    <location>
        <begin position="279"/>
        <end position="291"/>
    </location>
</feature>
<feature type="glycosylation site" description="N-linked (GlcNAc...) asparagine" evidence="3">
    <location>
        <position position="80"/>
    </location>
</feature>
<feature type="glycosylation site" description="N-linked (GlcNAc...) asparagine" evidence="3">
    <location>
        <position position="163"/>
    </location>
</feature>
<proteinExistence type="inferred from homology"/>
<accession>Q645Y4</accession>